<protein>
    <recommendedName>
        <fullName evidence="5">(2Z,6Z)-farnesyl diphosphate synthase CPT6, chloroplastic</fullName>
        <ecNumber evidence="5">2.5.1.92</ecNumber>
    </recommendedName>
    <alternativeName>
        <fullName evidence="4">Cis-prenyltransferase 6</fullName>
        <shortName evidence="4">SlCPT6</shortName>
    </alternativeName>
</protein>
<proteinExistence type="evidence at protein level"/>
<feature type="transit peptide" description="Chloroplast" evidence="2">
    <location>
        <begin position="1"/>
        <end position="30"/>
    </location>
</feature>
<feature type="chain" id="PRO_0000450937" description="(2Z,6Z)-farnesyl diphosphate synthase CPT6, chloroplastic">
    <location>
        <begin position="31"/>
        <end position="285"/>
    </location>
</feature>
<feature type="active site" evidence="1">
    <location>
        <position position="65"/>
    </location>
</feature>
<feature type="sequence conflict" description="In Ref. 1; AFW98430." evidence="5" ref="1">
    <location>
        <position position="118"/>
    </location>
</feature>
<organism>
    <name type="scientific">Solanum lycopersicum</name>
    <name type="common">Tomato</name>
    <name type="synonym">Lycopersicon esculentum</name>
    <dbReference type="NCBI Taxonomy" id="4081"/>
    <lineage>
        <taxon>Eukaryota</taxon>
        <taxon>Viridiplantae</taxon>
        <taxon>Streptophyta</taxon>
        <taxon>Embryophyta</taxon>
        <taxon>Tracheophyta</taxon>
        <taxon>Spermatophyta</taxon>
        <taxon>Magnoliopsida</taxon>
        <taxon>eudicotyledons</taxon>
        <taxon>Gunneridae</taxon>
        <taxon>Pentapetalae</taxon>
        <taxon>asterids</taxon>
        <taxon>lamiids</taxon>
        <taxon>Solanales</taxon>
        <taxon>Solanaceae</taxon>
        <taxon>Solanoideae</taxon>
        <taxon>Solaneae</taxon>
        <taxon>Solanum</taxon>
        <taxon>Solanum subgen. Lycopersicon</taxon>
    </lineage>
</organism>
<keyword id="KW-0150">Chloroplast</keyword>
<keyword id="KW-0460">Magnesium</keyword>
<keyword id="KW-0479">Metal-binding</keyword>
<keyword id="KW-0934">Plastid</keyword>
<keyword id="KW-1185">Reference proteome</keyword>
<keyword id="KW-0808">Transferase</keyword>
<keyword id="KW-0809">Transit peptide</keyword>
<gene>
    <name evidence="4" type="primary">CPT6</name>
    <name evidence="5" type="ordered locus">Solyc06g059990</name>
</gene>
<reference key="1">
    <citation type="journal article" date="2013" name="Plant J.">
        <title>The tomato cis-prenyltransferase gene family.</title>
        <authorList>
            <person name="Akhtar T.A."/>
            <person name="Matsuba Y."/>
            <person name="Schauvinhold I."/>
            <person name="Yu G."/>
            <person name="Lees H.A."/>
            <person name="Klein S.E."/>
            <person name="Pichersky E."/>
        </authorList>
    </citation>
    <scope>NUCLEOTIDE SEQUENCE [GENOMIC DNA]</scope>
    <scope>FUNCTION</scope>
    <scope>CATALYTIC ACTIVITY</scope>
    <scope>COFACTOR</scope>
    <scope>SUBCELLULAR LOCATION</scope>
    <scope>TISSUE SPECIFICITY</scope>
</reference>
<reference key="2">
    <citation type="journal article" date="2012" name="Nature">
        <title>The tomato genome sequence provides insights into fleshy fruit evolution.</title>
        <authorList>
            <consortium name="Tomato Genome Consortium"/>
        </authorList>
    </citation>
    <scope>NUCLEOTIDE SEQUENCE [LARGE SCALE GENOMIC DNA]</scope>
    <source>
        <strain>cv. Heinz 1706</strain>
    </source>
</reference>
<accession>K7W9N9</accession>
<accession>A0A3Q7GTN3</accession>
<dbReference type="EC" id="2.5.1.92" evidence="5"/>
<dbReference type="EMBL" id="JX943888">
    <property type="protein sequence ID" value="AFW98430.1"/>
    <property type="molecule type" value="Genomic_DNA"/>
</dbReference>
<dbReference type="EMBL" id="CM001069">
    <property type="status" value="NOT_ANNOTATED_CDS"/>
    <property type="molecule type" value="Genomic_DNA"/>
</dbReference>
<dbReference type="SMR" id="K7W9N9"/>
<dbReference type="STRING" id="4081.A0A3Q7GTN3"/>
<dbReference type="PaxDb" id="4081-Solyc06g059990.2.1"/>
<dbReference type="InParanoid" id="K7W9N9"/>
<dbReference type="BRENDA" id="2.5.1.92">
    <property type="organism ID" value="3101"/>
</dbReference>
<dbReference type="Proteomes" id="UP000004994">
    <property type="component" value="Chromosome 6"/>
</dbReference>
<dbReference type="GO" id="GO:0009507">
    <property type="term" value="C:chloroplast"/>
    <property type="evidence" value="ECO:0000314"/>
    <property type="project" value="UniProtKB"/>
</dbReference>
<dbReference type="GO" id="GO:0009570">
    <property type="term" value="C:chloroplast stroma"/>
    <property type="evidence" value="ECO:0000318"/>
    <property type="project" value="GO_Central"/>
</dbReference>
<dbReference type="GO" id="GO:0102059">
    <property type="term" value="F:(2Z,6Z)-farnesyl diphosphate synthase activity"/>
    <property type="evidence" value="ECO:0007669"/>
    <property type="project" value="UniProtKB-EC"/>
</dbReference>
<dbReference type="GO" id="GO:0047863">
    <property type="term" value="F:dimethylallylcistransferase activity"/>
    <property type="evidence" value="ECO:0007669"/>
    <property type="project" value="RHEA"/>
</dbReference>
<dbReference type="GO" id="GO:0000287">
    <property type="term" value="F:magnesium ion binding"/>
    <property type="evidence" value="ECO:0000314"/>
    <property type="project" value="UniProtKB"/>
</dbReference>
<dbReference type="GO" id="GO:0004659">
    <property type="term" value="F:prenyltransferase activity"/>
    <property type="evidence" value="ECO:0000314"/>
    <property type="project" value="UniProtKB"/>
</dbReference>
<dbReference type="GO" id="GO:0009668">
    <property type="term" value="P:plastid membrane organization"/>
    <property type="evidence" value="ECO:0000318"/>
    <property type="project" value="GO_Central"/>
</dbReference>
<dbReference type="GO" id="GO:0016094">
    <property type="term" value="P:polyprenol biosynthetic process"/>
    <property type="evidence" value="ECO:0000318"/>
    <property type="project" value="GO_Central"/>
</dbReference>
<dbReference type="GO" id="GO:0009409">
    <property type="term" value="P:response to cold"/>
    <property type="evidence" value="ECO:0000318"/>
    <property type="project" value="GO_Central"/>
</dbReference>
<dbReference type="CDD" id="cd00475">
    <property type="entry name" value="Cis_IPPS"/>
    <property type="match status" value="1"/>
</dbReference>
<dbReference type="FunFam" id="3.40.1180.10:FF:000001">
    <property type="entry name" value="(2E,6E)-farnesyl-diphosphate-specific ditrans,polycis-undecaprenyl-diphosphate synthase"/>
    <property type="match status" value="1"/>
</dbReference>
<dbReference type="Gene3D" id="3.40.1180.10">
    <property type="entry name" value="Decaprenyl diphosphate synthase-like"/>
    <property type="match status" value="1"/>
</dbReference>
<dbReference type="HAMAP" id="MF_01139">
    <property type="entry name" value="ISPT"/>
    <property type="match status" value="1"/>
</dbReference>
<dbReference type="InterPro" id="IPR001441">
    <property type="entry name" value="UPP_synth-like"/>
</dbReference>
<dbReference type="InterPro" id="IPR018520">
    <property type="entry name" value="UPP_synth-like_CS"/>
</dbReference>
<dbReference type="InterPro" id="IPR036424">
    <property type="entry name" value="UPP_synth-like_sf"/>
</dbReference>
<dbReference type="NCBIfam" id="TIGR00055">
    <property type="entry name" value="uppS"/>
    <property type="match status" value="1"/>
</dbReference>
<dbReference type="PANTHER" id="PTHR10291:SF16">
    <property type="entry name" value="(2Z,6Z)-FARNESYL DIPHOSPHATE SYNTHASE CPT6, CHLOROPLASTIC"/>
    <property type="match status" value="1"/>
</dbReference>
<dbReference type="PANTHER" id="PTHR10291">
    <property type="entry name" value="DEHYDRODOLICHYL DIPHOSPHATE SYNTHASE FAMILY MEMBER"/>
    <property type="match status" value="1"/>
</dbReference>
<dbReference type="Pfam" id="PF01255">
    <property type="entry name" value="Prenyltransf"/>
    <property type="match status" value="1"/>
</dbReference>
<dbReference type="SUPFAM" id="SSF64005">
    <property type="entry name" value="Undecaprenyl diphosphate synthase"/>
    <property type="match status" value="1"/>
</dbReference>
<dbReference type="PROSITE" id="PS01066">
    <property type="entry name" value="UPP_SYNTHASE"/>
    <property type="match status" value="1"/>
</dbReference>
<comment type="function">
    <text evidence="3">Uses neryl diphosphate to catalyze the cis-prenyl chain elongation and produce the 15 carbon product (2Z,6Z)-farnesyl diphosphate.</text>
</comment>
<comment type="catalytic activity">
    <reaction evidence="3">
        <text>2 isopentenyl diphosphate + dimethylallyl diphosphate = (2Z,6Z)-farnesyl diphosphate + 2 diphosphate</text>
        <dbReference type="Rhea" id="RHEA:27810"/>
        <dbReference type="ChEBI" id="CHEBI:33019"/>
        <dbReference type="ChEBI" id="CHEBI:57623"/>
        <dbReference type="ChEBI" id="CHEBI:60374"/>
        <dbReference type="ChEBI" id="CHEBI:128769"/>
        <dbReference type="EC" id="2.5.1.92"/>
    </reaction>
    <physiologicalReaction direction="left-to-right" evidence="3">
        <dbReference type="Rhea" id="RHEA:27811"/>
    </physiologicalReaction>
</comment>
<comment type="catalytic activity">
    <reaction evidence="3">
        <text>isopentenyl diphosphate + dimethylallyl diphosphate = neryl diphosphate + diphosphate</text>
        <dbReference type="Rhea" id="RHEA:11328"/>
        <dbReference type="ChEBI" id="CHEBI:33019"/>
        <dbReference type="ChEBI" id="CHEBI:57623"/>
        <dbReference type="ChEBI" id="CHEBI:57665"/>
        <dbReference type="ChEBI" id="CHEBI:128769"/>
    </reaction>
    <physiologicalReaction direction="left-to-right" evidence="3">
        <dbReference type="Rhea" id="RHEA:11329"/>
    </physiologicalReaction>
</comment>
<comment type="catalytic activity">
    <reaction evidence="3">
        <text>neryl diphosphate + isopentenyl diphosphate = (2Z,6Z)-farnesyl diphosphate + diphosphate</text>
        <dbReference type="Rhea" id="RHEA:64572"/>
        <dbReference type="ChEBI" id="CHEBI:33019"/>
        <dbReference type="ChEBI" id="CHEBI:57665"/>
        <dbReference type="ChEBI" id="CHEBI:60374"/>
        <dbReference type="ChEBI" id="CHEBI:128769"/>
    </reaction>
    <physiologicalReaction direction="left-to-right" evidence="3">
        <dbReference type="Rhea" id="RHEA:64573"/>
    </physiologicalReaction>
</comment>
<comment type="cofactor">
    <cofactor evidence="3">
        <name>Mg(2+)</name>
        <dbReference type="ChEBI" id="CHEBI:18420"/>
    </cofactor>
</comment>
<comment type="subcellular location">
    <subcellularLocation>
        <location evidence="3">Plastid</location>
        <location evidence="3">Chloroplast</location>
    </subcellularLocation>
    <text evidence="3">Localizes in punctuate patterns inside the chloroplasts.</text>
</comment>
<comment type="tissue specificity">
    <text evidence="3">Expressed in roots and red fruits.</text>
</comment>
<comment type="similarity">
    <text evidence="5">Belongs to the UPP synthase family.</text>
</comment>
<evidence type="ECO:0000250" key="1">
    <source>
        <dbReference type="UniProtKB" id="P60472"/>
    </source>
</evidence>
<evidence type="ECO:0000255" key="2"/>
<evidence type="ECO:0000269" key="3">
    <source>
    </source>
</evidence>
<evidence type="ECO:0000303" key="4">
    <source>
    </source>
</evidence>
<evidence type="ECO:0000305" key="5"/>
<sequence length="285" mass="32797">MNSLFVGRPIVKSSYNVYTLPSSICGGHFFKVSNSLSLYDDHRRTRIEIIRNSELIPKHVAIIMDGNRRWAKARGLPVQEGHKFLAPNLKNICNISSKLGIQVITAFAFSTENWNRSSEEVDFLMRLFEEFFEEFMRLGVRVSLIGGKSKLPTKLQQVIELTEEVTKSNEGLHLMMALNYGGQYDMLQATKNIASKVKDGLIKLEDIDYTLFEQELTTKCAKFPKPDLLIRTGGEQRISNFLLWQLAYSELYFTNTLFPDFGEEALMDAIFSFQRRHRRFGGHTY</sequence>
<name>CPT6_SOLLC</name>